<accession>Q4KIA3</accession>
<keyword id="KW-0963">Cytoplasm</keyword>
<keyword id="KW-0378">Hydrolase</keyword>
<keyword id="KW-0546">Nucleotide metabolism</keyword>
<sequence>MNPLYLASGSPRRRELLTQIGVPFTAISADIDETPLADESPAAYVERLARGKAAAGRGLITSSESQAPACVLGADTAVVLDGRILGKPLDQADALQMLMALSGREHEVFTAIALLDGERCESRVVRSLVRFRPISPAEAALYWASGEPCDKAGGYAIQGLAAVFVAGLNGSYSAVVGLPVCETAELLGHFGIPCWQNLPVR</sequence>
<reference key="1">
    <citation type="journal article" date="2005" name="Nat. Biotechnol.">
        <title>Complete genome sequence of the plant commensal Pseudomonas fluorescens Pf-5.</title>
        <authorList>
            <person name="Paulsen I.T."/>
            <person name="Press C.M."/>
            <person name="Ravel J."/>
            <person name="Kobayashi D.Y."/>
            <person name="Myers G.S.A."/>
            <person name="Mavrodi D.V."/>
            <person name="DeBoy R.T."/>
            <person name="Seshadri R."/>
            <person name="Ren Q."/>
            <person name="Madupu R."/>
            <person name="Dodson R.J."/>
            <person name="Durkin A.S."/>
            <person name="Brinkac L.M."/>
            <person name="Daugherty S.C."/>
            <person name="Sullivan S.A."/>
            <person name="Rosovitz M.J."/>
            <person name="Gwinn M.L."/>
            <person name="Zhou L."/>
            <person name="Schneider D.J."/>
            <person name="Cartinhour S.W."/>
            <person name="Nelson W.C."/>
            <person name="Weidman J."/>
            <person name="Watkins K."/>
            <person name="Tran K."/>
            <person name="Khouri H."/>
            <person name="Pierson E.A."/>
            <person name="Pierson L.S. III"/>
            <person name="Thomashow L.S."/>
            <person name="Loper J.E."/>
        </authorList>
    </citation>
    <scope>NUCLEOTIDE SEQUENCE [LARGE SCALE GENOMIC DNA]</scope>
    <source>
        <strain>ATCC BAA-477 / NRRL B-23932 / Pf-5</strain>
    </source>
</reference>
<gene>
    <name type="ordered locus">PFL_0899</name>
</gene>
<name>NTPPA_PSEF5</name>
<dbReference type="EC" id="3.6.1.9" evidence="1"/>
<dbReference type="EMBL" id="CP000076">
    <property type="protein sequence ID" value="AAY90186.1"/>
    <property type="molecule type" value="Genomic_DNA"/>
</dbReference>
<dbReference type="RefSeq" id="WP_011059253.1">
    <property type="nucleotide sequence ID" value="NC_004129.6"/>
</dbReference>
<dbReference type="SMR" id="Q4KIA3"/>
<dbReference type="STRING" id="220664.PFL_0899"/>
<dbReference type="KEGG" id="pfl:PFL_0899"/>
<dbReference type="PATRIC" id="fig|220664.5.peg.921"/>
<dbReference type="eggNOG" id="COG0424">
    <property type="taxonomic scope" value="Bacteria"/>
</dbReference>
<dbReference type="HOGENOM" id="CLU_040416_2_1_6"/>
<dbReference type="Proteomes" id="UP000008540">
    <property type="component" value="Chromosome"/>
</dbReference>
<dbReference type="GO" id="GO:0005737">
    <property type="term" value="C:cytoplasm"/>
    <property type="evidence" value="ECO:0007669"/>
    <property type="project" value="UniProtKB-SubCell"/>
</dbReference>
<dbReference type="GO" id="GO:0036218">
    <property type="term" value="F:dTTP diphosphatase activity"/>
    <property type="evidence" value="ECO:0007669"/>
    <property type="project" value="RHEA"/>
</dbReference>
<dbReference type="GO" id="GO:0036221">
    <property type="term" value="F:UTP diphosphatase activity"/>
    <property type="evidence" value="ECO:0007669"/>
    <property type="project" value="RHEA"/>
</dbReference>
<dbReference type="GO" id="GO:0009117">
    <property type="term" value="P:nucleotide metabolic process"/>
    <property type="evidence" value="ECO:0007669"/>
    <property type="project" value="UniProtKB-KW"/>
</dbReference>
<dbReference type="CDD" id="cd00555">
    <property type="entry name" value="Maf"/>
    <property type="match status" value="1"/>
</dbReference>
<dbReference type="Gene3D" id="3.90.950.10">
    <property type="match status" value="1"/>
</dbReference>
<dbReference type="HAMAP" id="MF_00528">
    <property type="entry name" value="Maf"/>
    <property type="match status" value="1"/>
</dbReference>
<dbReference type="InterPro" id="IPR029001">
    <property type="entry name" value="ITPase-like_fam"/>
</dbReference>
<dbReference type="InterPro" id="IPR003697">
    <property type="entry name" value="Maf-like"/>
</dbReference>
<dbReference type="NCBIfam" id="TIGR00172">
    <property type="entry name" value="maf"/>
    <property type="match status" value="1"/>
</dbReference>
<dbReference type="PANTHER" id="PTHR43213">
    <property type="entry name" value="BIFUNCTIONAL DTTP/UTP PYROPHOSPHATASE/METHYLTRANSFERASE PROTEIN-RELATED"/>
    <property type="match status" value="1"/>
</dbReference>
<dbReference type="PANTHER" id="PTHR43213:SF5">
    <property type="entry name" value="BIFUNCTIONAL DTTP_UTP PYROPHOSPHATASE_METHYLTRANSFERASE PROTEIN-RELATED"/>
    <property type="match status" value="1"/>
</dbReference>
<dbReference type="Pfam" id="PF02545">
    <property type="entry name" value="Maf"/>
    <property type="match status" value="1"/>
</dbReference>
<dbReference type="PIRSF" id="PIRSF006305">
    <property type="entry name" value="Maf"/>
    <property type="match status" value="1"/>
</dbReference>
<dbReference type="SUPFAM" id="SSF52972">
    <property type="entry name" value="ITPase-like"/>
    <property type="match status" value="1"/>
</dbReference>
<evidence type="ECO:0000255" key="1">
    <source>
        <dbReference type="HAMAP-Rule" id="MF_00528"/>
    </source>
</evidence>
<protein>
    <recommendedName>
        <fullName evidence="1">dTTP/UTP pyrophosphatase</fullName>
        <shortName evidence="1">dTTPase/UTPase</shortName>
        <ecNumber evidence="1">3.6.1.9</ecNumber>
    </recommendedName>
    <alternativeName>
        <fullName evidence="1">Nucleoside triphosphate pyrophosphatase</fullName>
    </alternativeName>
    <alternativeName>
        <fullName evidence="1">Nucleotide pyrophosphatase</fullName>
        <shortName evidence="1">Nucleotide PPase</shortName>
    </alternativeName>
</protein>
<proteinExistence type="inferred from homology"/>
<feature type="chain" id="PRO_0000267378" description="dTTP/UTP pyrophosphatase">
    <location>
        <begin position="1"/>
        <end position="201"/>
    </location>
</feature>
<feature type="active site" description="Proton acceptor" evidence="1">
    <location>
        <position position="75"/>
    </location>
</feature>
<feature type="site" description="Important for substrate specificity" evidence="1">
    <location>
        <position position="12"/>
    </location>
</feature>
<feature type="site" description="Important for substrate specificity" evidence="1">
    <location>
        <position position="76"/>
    </location>
</feature>
<feature type="site" description="Important for substrate specificity" evidence="1">
    <location>
        <position position="158"/>
    </location>
</feature>
<organism>
    <name type="scientific">Pseudomonas fluorescens (strain ATCC BAA-477 / NRRL B-23932 / Pf-5)</name>
    <dbReference type="NCBI Taxonomy" id="220664"/>
    <lineage>
        <taxon>Bacteria</taxon>
        <taxon>Pseudomonadati</taxon>
        <taxon>Pseudomonadota</taxon>
        <taxon>Gammaproteobacteria</taxon>
        <taxon>Pseudomonadales</taxon>
        <taxon>Pseudomonadaceae</taxon>
        <taxon>Pseudomonas</taxon>
    </lineage>
</organism>
<comment type="function">
    <text evidence="1">Nucleoside triphosphate pyrophosphatase that hydrolyzes dTTP and UTP. May have a dual role in cell division arrest and in preventing the incorporation of modified nucleotides into cellular nucleic acids.</text>
</comment>
<comment type="catalytic activity">
    <reaction evidence="1">
        <text>dTTP + H2O = dTMP + diphosphate + H(+)</text>
        <dbReference type="Rhea" id="RHEA:28534"/>
        <dbReference type="ChEBI" id="CHEBI:15377"/>
        <dbReference type="ChEBI" id="CHEBI:15378"/>
        <dbReference type="ChEBI" id="CHEBI:33019"/>
        <dbReference type="ChEBI" id="CHEBI:37568"/>
        <dbReference type="ChEBI" id="CHEBI:63528"/>
        <dbReference type="EC" id="3.6.1.9"/>
    </reaction>
</comment>
<comment type="catalytic activity">
    <reaction evidence="1">
        <text>UTP + H2O = UMP + diphosphate + H(+)</text>
        <dbReference type="Rhea" id="RHEA:29395"/>
        <dbReference type="ChEBI" id="CHEBI:15377"/>
        <dbReference type="ChEBI" id="CHEBI:15378"/>
        <dbReference type="ChEBI" id="CHEBI:33019"/>
        <dbReference type="ChEBI" id="CHEBI:46398"/>
        <dbReference type="ChEBI" id="CHEBI:57865"/>
        <dbReference type="EC" id="3.6.1.9"/>
    </reaction>
</comment>
<comment type="cofactor">
    <cofactor evidence="1">
        <name>a divalent metal cation</name>
        <dbReference type="ChEBI" id="CHEBI:60240"/>
    </cofactor>
</comment>
<comment type="subcellular location">
    <subcellularLocation>
        <location evidence="1">Cytoplasm</location>
    </subcellularLocation>
</comment>
<comment type="similarity">
    <text evidence="1">Belongs to the Maf family. YhdE subfamily.</text>
</comment>